<name>ZEAV_MAIZE</name>
<reference key="1">
    <citation type="journal article" date="1982" name="EMBO J.">
        <title>Sequence analysis and comparison of cDNAs of the zein multigene family.</title>
        <authorList>
            <person name="Geraghty D.E."/>
            <person name="Messing J."/>
            <person name="Rubenstein I."/>
        </authorList>
    </citation>
    <scope>NUCLEOTIDE SEQUENCE</scope>
</reference>
<evidence type="ECO:0000250" key="1">
    <source>
        <dbReference type="UniProtKB" id="P04698"/>
    </source>
</evidence>
<evidence type="ECO:0000305" key="2"/>
<comment type="function">
    <text>Zeins are major seed storage proteins.</text>
</comment>
<comment type="miscellaneous">
    <text>The alpha zeins of 19 kDa and 22 kDa account for 70% of the total zein fraction. They are encoded by a large multigene family.</text>
</comment>
<comment type="miscellaneous">
    <text evidence="1">Structurally, 22K and 19K zeins are composed of nine adjacent, topologically antiparallel helices clustered within a distorted cylinder.</text>
</comment>
<comment type="similarity">
    <text evidence="2">Belongs to the zein family.</text>
</comment>
<keyword id="KW-1185">Reference proteome</keyword>
<keyword id="KW-0677">Repeat</keyword>
<keyword id="KW-0708">Seed storage protein</keyword>
<keyword id="KW-0758">Storage protein</keyword>
<protein>
    <recommendedName>
        <fullName>Zein-alpha B49</fullName>
    </recommendedName>
    <alternativeName>
        <fullName>22 kDa zein B49</fullName>
    </alternativeName>
</protein>
<sequence length="122" mass="13425">AMVNPAAYLQQQQLISSSPLDVVNAPTYLQQQLLQQIIPALTQLAVANPAAYLQQLLPFNQLTVSNSAAYLQQRQQLLNPLVVANPLVAAFLQQQQLLPYNQFSLMNPALSWQQPIVGGAIF</sequence>
<dbReference type="PIR" id="B22762">
    <property type="entry name" value="ZIZM49"/>
</dbReference>
<dbReference type="MaizeGDB" id="58096"/>
<dbReference type="InParanoid" id="P05815"/>
<dbReference type="Proteomes" id="UP000007305">
    <property type="component" value="Unplaced"/>
</dbReference>
<dbReference type="ExpressionAtlas" id="P05815">
    <property type="expression patterns" value="baseline and differential"/>
</dbReference>
<dbReference type="GO" id="GO:0045735">
    <property type="term" value="F:nutrient reservoir activity"/>
    <property type="evidence" value="ECO:0007669"/>
    <property type="project" value="UniProtKB-KW"/>
</dbReference>
<dbReference type="InterPro" id="IPR051529">
    <property type="entry name" value="Seed_Storage_Prolamin"/>
</dbReference>
<dbReference type="InterPro" id="IPR002530">
    <property type="entry name" value="Zein"/>
</dbReference>
<dbReference type="PANTHER" id="PTHR48199">
    <property type="entry name" value="ALPHA KAFIRIN"/>
    <property type="match status" value="1"/>
</dbReference>
<dbReference type="PANTHER" id="PTHR48199:SF1">
    <property type="entry name" value="ALPHA KAFIRIN"/>
    <property type="match status" value="1"/>
</dbReference>
<dbReference type="Pfam" id="PF01559">
    <property type="entry name" value="Zein"/>
    <property type="match status" value="1"/>
</dbReference>
<proteinExistence type="inferred from homology"/>
<feature type="chain" id="PRO_0000223078" description="Zein-alpha B49">
    <location>
        <begin position="1" status="less than"/>
        <end position="122"/>
    </location>
</feature>
<feature type="non-terminal residue">
    <location>
        <position position="1"/>
    </location>
</feature>
<accession>P05815</accession>
<organism>
    <name type="scientific">Zea mays</name>
    <name type="common">Maize</name>
    <dbReference type="NCBI Taxonomy" id="4577"/>
    <lineage>
        <taxon>Eukaryota</taxon>
        <taxon>Viridiplantae</taxon>
        <taxon>Streptophyta</taxon>
        <taxon>Embryophyta</taxon>
        <taxon>Tracheophyta</taxon>
        <taxon>Spermatophyta</taxon>
        <taxon>Magnoliopsida</taxon>
        <taxon>Liliopsida</taxon>
        <taxon>Poales</taxon>
        <taxon>Poaceae</taxon>
        <taxon>PACMAD clade</taxon>
        <taxon>Panicoideae</taxon>
        <taxon>Andropogonodae</taxon>
        <taxon>Andropogoneae</taxon>
        <taxon>Tripsacinae</taxon>
        <taxon>Zea</taxon>
    </lineage>
</organism>